<reference key="1">
    <citation type="journal article" date="2009" name="J. Bacteriol.">
        <title>Genomic sequencing reveals regulatory mutations and recombinational events in the widely used MC4100 lineage of Escherichia coli K-12.</title>
        <authorList>
            <person name="Ferenci T."/>
            <person name="Zhou Z."/>
            <person name="Betteridge T."/>
            <person name="Ren Y."/>
            <person name="Liu Y."/>
            <person name="Feng L."/>
            <person name="Reeves P.R."/>
            <person name="Wang L."/>
        </authorList>
    </citation>
    <scope>NUCLEOTIDE SEQUENCE [LARGE SCALE GENOMIC DNA]</scope>
    <source>
        <strain>K12 / MC4100 / BW2952</strain>
    </source>
</reference>
<dbReference type="EC" id="2.7.7.8" evidence="1"/>
<dbReference type="EMBL" id="CP001396">
    <property type="protein sequence ID" value="ACR64076.1"/>
    <property type="molecule type" value="Genomic_DNA"/>
</dbReference>
<dbReference type="RefSeq" id="WP_001295554.1">
    <property type="nucleotide sequence ID" value="NC_012759.1"/>
</dbReference>
<dbReference type="EMDB" id="EMD-43092"/>
<dbReference type="EMDB" id="EMD-43093"/>
<dbReference type="SMR" id="C4ZSQ5"/>
<dbReference type="KEGG" id="ebw:BWG_2868"/>
<dbReference type="HOGENOM" id="CLU_004217_2_2_6"/>
<dbReference type="GO" id="GO:0005829">
    <property type="term" value="C:cytosol"/>
    <property type="evidence" value="ECO:0007669"/>
    <property type="project" value="TreeGrafter"/>
</dbReference>
<dbReference type="GO" id="GO:0000175">
    <property type="term" value="F:3'-5'-RNA exonuclease activity"/>
    <property type="evidence" value="ECO:0007669"/>
    <property type="project" value="TreeGrafter"/>
</dbReference>
<dbReference type="GO" id="GO:0000287">
    <property type="term" value="F:magnesium ion binding"/>
    <property type="evidence" value="ECO:0007669"/>
    <property type="project" value="UniProtKB-UniRule"/>
</dbReference>
<dbReference type="GO" id="GO:0004654">
    <property type="term" value="F:polyribonucleotide nucleotidyltransferase activity"/>
    <property type="evidence" value="ECO:0007669"/>
    <property type="project" value="UniProtKB-UniRule"/>
</dbReference>
<dbReference type="GO" id="GO:0003723">
    <property type="term" value="F:RNA binding"/>
    <property type="evidence" value="ECO:0007669"/>
    <property type="project" value="UniProtKB-UniRule"/>
</dbReference>
<dbReference type="GO" id="GO:0006402">
    <property type="term" value="P:mRNA catabolic process"/>
    <property type="evidence" value="ECO:0007669"/>
    <property type="project" value="UniProtKB-UniRule"/>
</dbReference>
<dbReference type="GO" id="GO:0006396">
    <property type="term" value="P:RNA processing"/>
    <property type="evidence" value="ECO:0007669"/>
    <property type="project" value="InterPro"/>
</dbReference>
<dbReference type="CDD" id="cd02393">
    <property type="entry name" value="KH-I_PNPase"/>
    <property type="match status" value="1"/>
</dbReference>
<dbReference type="CDD" id="cd11363">
    <property type="entry name" value="RNase_PH_PNPase_1"/>
    <property type="match status" value="1"/>
</dbReference>
<dbReference type="CDD" id="cd11364">
    <property type="entry name" value="RNase_PH_PNPase_2"/>
    <property type="match status" value="1"/>
</dbReference>
<dbReference type="CDD" id="cd04472">
    <property type="entry name" value="S1_PNPase"/>
    <property type="match status" value="1"/>
</dbReference>
<dbReference type="FunFam" id="2.40.50.140:FF:000023">
    <property type="entry name" value="Polyribonucleotide nucleotidyltransferase"/>
    <property type="match status" value="1"/>
</dbReference>
<dbReference type="FunFam" id="3.30.1370.10:FF:000001">
    <property type="entry name" value="Polyribonucleotide nucleotidyltransferase"/>
    <property type="match status" value="1"/>
</dbReference>
<dbReference type="FunFam" id="3.30.230.70:FF:000001">
    <property type="entry name" value="Polyribonucleotide nucleotidyltransferase"/>
    <property type="match status" value="1"/>
</dbReference>
<dbReference type="FunFam" id="3.30.230.70:FF:000002">
    <property type="entry name" value="Polyribonucleotide nucleotidyltransferase"/>
    <property type="match status" value="1"/>
</dbReference>
<dbReference type="Gene3D" id="3.30.230.70">
    <property type="entry name" value="GHMP Kinase, N-terminal domain"/>
    <property type="match status" value="2"/>
</dbReference>
<dbReference type="Gene3D" id="3.30.1370.10">
    <property type="entry name" value="K Homology domain, type 1"/>
    <property type="match status" value="1"/>
</dbReference>
<dbReference type="Gene3D" id="2.40.50.140">
    <property type="entry name" value="Nucleic acid-binding proteins"/>
    <property type="match status" value="1"/>
</dbReference>
<dbReference type="HAMAP" id="MF_01595">
    <property type="entry name" value="PNPase"/>
    <property type="match status" value="1"/>
</dbReference>
<dbReference type="InterPro" id="IPR001247">
    <property type="entry name" value="ExoRNase_PH_dom1"/>
</dbReference>
<dbReference type="InterPro" id="IPR015847">
    <property type="entry name" value="ExoRNase_PH_dom2"/>
</dbReference>
<dbReference type="InterPro" id="IPR036345">
    <property type="entry name" value="ExoRNase_PH_dom2_sf"/>
</dbReference>
<dbReference type="InterPro" id="IPR004087">
    <property type="entry name" value="KH_dom"/>
</dbReference>
<dbReference type="InterPro" id="IPR004088">
    <property type="entry name" value="KH_dom_type_1"/>
</dbReference>
<dbReference type="InterPro" id="IPR036612">
    <property type="entry name" value="KH_dom_type_1_sf"/>
</dbReference>
<dbReference type="InterPro" id="IPR012340">
    <property type="entry name" value="NA-bd_OB-fold"/>
</dbReference>
<dbReference type="InterPro" id="IPR012162">
    <property type="entry name" value="PNPase"/>
</dbReference>
<dbReference type="InterPro" id="IPR027408">
    <property type="entry name" value="PNPase/RNase_PH_dom_sf"/>
</dbReference>
<dbReference type="InterPro" id="IPR015848">
    <property type="entry name" value="PNPase_PH_RNA-bd_bac/org-type"/>
</dbReference>
<dbReference type="InterPro" id="IPR036456">
    <property type="entry name" value="PNPase_PH_RNA-bd_sf"/>
</dbReference>
<dbReference type="InterPro" id="IPR020568">
    <property type="entry name" value="Ribosomal_Su5_D2-typ_SF"/>
</dbReference>
<dbReference type="InterPro" id="IPR003029">
    <property type="entry name" value="S1_domain"/>
</dbReference>
<dbReference type="NCBIfam" id="TIGR03591">
    <property type="entry name" value="polynuc_phos"/>
    <property type="match status" value="1"/>
</dbReference>
<dbReference type="NCBIfam" id="NF008805">
    <property type="entry name" value="PRK11824.1"/>
    <property type="match status" value="1"/>
</dbReference>
<dbReference type="PANTHER" id="PTHR11252">
    <property type="entry name" value="POLYRIBONUCLEOTIDE NUCLEOTIDYLTRANSFERASE"/>
    <property type="match status" value="1"/>
</dbReference>
<dbReference type="PANTHER" id="PTHR11252:SF0">
    <property type="entry name" value="POLYRIBONUCLEOTIDE NUCLEOTIDYLTRANSFERASE 1, MITOCHONDRIAL"/>
    <property type="match status" value="1"/>
</dbReference>
<dbReference type="Pfam" id="PF00013">
    <property type="entry name" value="KH_1"/>
    <property type="match status" value="1"/>
</dbReference>
<dbReference type="Pfam" id="PF03726">
    <property type="entry name" value="PNPase"/>
    <property type="match status" value="1"/>
</dbReference>
<dbReference type="Pfam" id="PF01138">
    <property type="entry name" value="RNase_PH"/>
    <property type="match status" value="2"/>
</dbReference>
<dbReference type="Pfam" id="PF03725">
    <property type="entry name" value="RNase_PH_C"/>
    <property type="match status" value="2"/>
</dbReference>
<dbReference type="Pfam" id="PF00575">
    <property type="entry name" value="S1"/>
    <property type="match status" value="1"/>
</dbReference>
<dbReference type="PIRSF" id="PIRSF005499">
    <property type="entry name" value="PNPase"/>
    <property type="match status" value="1"/>
</dbReference>
<dbReference type="SMART" id="SM00322">
    <property type="entry name" value="KH"/>
    <property type="match status" value="1"/>
</dbReference>
<dbReference type="SMART" id="SM00316">
    <property type="entry name" value="S1"/>
    <property type="match status" value="1"/>
</dbReference>
<dbReference type="SUPFAM" id="SSF54791">
    <property type="entry name" value="Eukaryotic type KH-domain (KH-domain type I)"/>
    <property type="match status" value="1"/>
</dbReference>
<dbReference type="SUPFAM" id="SSF50249">
    <property type="entry name" value="Nucleic acid-binding proteins"/>
    <property type="match status" value="1"/>
</dbReference>
<dbReference type="SUPFAM" id="SSF46915">
    <property type="entry name" value="Polynucleotide phosphorylase/guanosine pentaphosphate synthase (PNPase/GPSI), domain 3"/>
    <property type="match status" value="1"/>
</dbReference>
<dbReference type="SUPFAM" id="SSF55666">
    <property type="entry name" value="Ribonuclease PH domain 2-like"/>
    <property type="match status" value="2"/>
</dbReference>
<dbReference type="SUPFAM" id="SSF54211">
    <property type="entry name" value="Ribosomal protein S5 domain 2-like"/>
    <property type="match status" value="2"/>
</dbReference>
<dbReference type="PROSITE" id="PS50084">
    <property type="entry name" value="KH_TYPE_1"/>
    <property type="match status" value="1"/>
</dbReference>
<dbReference type="PROSITE" id="PS50126">
    <property type="entry name" value="S1"/>
    <property type="match status" value="1"/>
</dbReference>
<evidence type="ECO:0000255" key="1">
    <source>
        <dbReference type="HAMAP-Rule" id="MF_01595"/>
    </source>
</evidence>
<evidence type="ECO:0000256" key="2">
    <source>
        <dbReference type="SAM" id="MobiDB-lite"/>
    </source>
</evidence>
<feature type="chain" id="PRO_1000215657" description="Polyribonucleotide nucleotidyltransferase">
    <location>
        <begin position="1"/>
        <end position="711"/>
    </location>
</feature>
<feature type="domain" description="KH" evidence="1">
    <location>
        <begin position="553"/>
        <end position="612"/>
    </location>
</feature>
<feature type="domain" description="S1 motif" evidence="1">
    <location>
        <begin position="622"/>
        <end position="690"/>
    </location>
</feature>
<feature type="region of interest" description="Disordered" evidence="2">
    <location>
        <begin position="689"/>
        <end position="711"/>
    </location>
</feature>
<feature type="compositionally biased region" description="Low complexity" evidence="2">
    <location>
        <begin position="694"/>
        <end position="711"/>
    </location>
</feature>
<feature type="binding site" evidence="1">
    <location>
        <position position="486"/>
    </location>
    <ligand>
        <name>Mg(2+)</name>
        <dbReference type="ChEBI" id="CHEBI:18420"/>
    </ligand>
</feature>
<feature type="binding site" evidence="1">
    <location>
        <position position="492"/>
    </location>
    <ligand>
        <name>Mg(2+)</name>
        <dbReference type="ChEBI" id="CHEBI:18420"/>
    </ligand>
</feature>
<protein>
    <recommendedName>
        <fullName evidence="1">Polyribonucleotide nucleotidyltransferase</fullName>
        <ecNumber evidence="1">2.7.7.8</ecNumber>
    </recommendedName>
    <alternativeName>
        <fullName evidence="1">Polynucleotide phosphorylase</fullName>
        <shortName evidence="1">PNPase</shortName>
    </alternativeName>
</protein>
<accession>C4ZSQ5</accession>
<keyword id="KW-0963">Cytoplasm</keyword>
<keyword id="KW-0460">Magnesium</keyword>
<keyword id="KW-0479">Metal-binding</keyword>
<keyword id="KW-0548">Nucleotidyltransferase</keyword>
<keyword id="KW-0694">RNA-binding</keyword>
<keyword id="KW-0808">Transferase</keyword>
<name>PNP_ECOBW</name>
<organism>
    <name type="scientific">Escherichia coli (strain K12 / MC4100 / BW2952)</name>
    <dbReference type="NCBI Taxonomy" id="595496"/>
    <lineage>
        <taxon>Bacteria</taxon>
        <taxon>Pseudomonadati</taxon>
        <taxon>Pseudomonadota</taxon>
        <taxon>Gammaproteobacteria</taxon>
        <taxon>Enterobacterales</taxon>
        <taxon>Enterobacteriaceae</taxon>
        <taxon>Escherichia</taxon>
    </lineage>
</organism>
<gene>
    <name evidence="1" type="primary">pnp</name>
    <name type="ordered locus">BWG_2868</name>
</gene>
<proteinExistence type="inferred from homology"/>
<comment type="function">
    <text evidence="1">Involved in mRNA degradation. Catalyzes the phosphorolysis of single-stranded polyribonucleotides processively in the 3'- to 5'-direction.</text>
</comment>
<comment type="catalytic activity">
    <reaction evidence="1">
        <text>RNA(n+1) + phosphate = RNA(n) + a ribonucleoside 5'-diphosphate</text>
        <dbReference type="Rhea" id="RHEA:22096"/>
        <dbReference type="Rhea" id="RHEA-COMP:14527"/>
        <dbReference type="Rhea" id="RHEA-COMP:17342"/>
        <dbReference type="ChEBI" id="CHEBI:43474"/>
        <dbReference type="ChEBI" id="CHEBI:57930"/>
        <dbReference type="ChEBI" id="CHEBI:140395"/>
        <dbReference type="EC" id="2.7.7.8"/>
    </reaction>
</comment>
<comment type="cofactor">
    <cofactor evidence="1">
        <name>Mg(2+)</name>
        <dbReference type="ChEBI" id="CHEBI:18420"/>
    </cofactor>
</comment>
<comment type="subunit">
    <text evidence="1">Component of the RNA degradosome, which is a multiprotein complex involved in RNA processing and mRNA degradation.</text>
</comment>
<comment type="subcellular location">
    <subcellularLocation>
        <location evidence="1">Cytoplasm</location>
    </subcellularLocation>
</comment>
<comment type="similarity">
    <text evidence="1">Belongs to the polyribonucleotide nucleotidyltransferase family.</text>
</comment>
<sequence length="711" mass="77101">MLNPIVRKFQYGQHTVTLETGMMARQATAAVMVSMDDTAVFVTVVGQKKAKPGQDFFPLTVNYQERTYAAGRIPGSFFRREGRPSEGETLIARLIDRPIRPLFPEGFVNEVQVIATVVSVNPQVNPDIVAMIGASAALSLSGIPFNGPIGAARVGYINDQYVLNPTQDELKESKLDLVVAGTEAAVLMVESEAQLLSEDQMLGAVVFGHEQQQVVIQNINELVKEAGKPRWDWQPEPVNEALNARVAALAEARLSDAYRITDKQERYAQVDVIKSETIATLLAEDETLDENELGEILHAIEKNVVRSRVLAGEPRIDGREKDMIRGLDVRTGVLPRTHGSALFTRGETQALVTATLGTARDAQVLDELMGERTDTFLFHYNFPPYSVGETGMVGSPKRREIGHGRLAKRGVLAVMPDMDKFPYTVRVVSEITESNGSSSMASVCGASLALMDAGVPIKAAVAGIAMGLVKEGDNYVVLSDILGDEDHLGDMDFKVAGSRDGISALQMDIKIEGITKEIMQVALNQAKGARLHILGVMEQAINAPRGDISEFAPRIHTIKINPDKIKDVIGKGGSVIRALTEETGTTIEIEDDGTVKIAATDGEKAKHAIRRIEEITAEIEVGRVYTGKVTRIVDFGAFVAIGGGKEGLVHISQIADKRVEKVTDYLQMGQEVPVKVLEVDRQGRIRLSIKEATEQSQPAAAPEAPAAEQGE</sequence>